<proteinExistence type="inferred from homology"/>
<feature type="chain" id="PRO_0000068281" description="UPF0212 protein PF1486">
    <location>
        <begin position="1"/>
        <end position="130"/>
    </location>
</feature>
<protein>
    <recommendedName>
        <fullName evidence="1">UPF0212 protein PF1486</fullName>
    </recommendedName>
</protein>
<name>Y1486_PYRFU</name>
<sequence length="130" mass="14246">MGDYIVVLEAPIVVKDVESVEEAIEKAVNKVVSALEREKLDFVRVELGYSQCPVCGAHFESAFVVGNVGLVGIYLTLKVFNAQSLEHAERIAKAVVGKALKKVPLKLFEIKELHNGREGGGITFEEEYQG</sequence>
<organism>
    <name type="scientific">Pyrococcus furiosus (strain ATCC 43587 / DSM 3638 / JCM 8422 / Vc1)</name>
    <dbReference type="NCBI Taxonomy" id="186497"/>
    <lineage>
        <taxon>Archaea</taxon>
        <taxon>Methanobacteriati</taxon>
        <taxon>Methanobacteriota</taxon>
        <taxon>Thermococci</taxon>
        <taxon>Thermococcales</taxon>
        <taxon>Thermococcaceae</taxon>
        <taxon>Pyrococcus</taxon>
    </lineage>
</organism>
<gene>
    <name type="ordered locus">PF1486</name>
</gene>
<dbReference type="EMBL" id="AE009950">
    <property type="protein sequence ID" value="AAL81610.1"/>
    <property type="molecule type" value="Genomic_DNA"/>
</dbReference>
<dbReference type="RefSeq" id="WP_011012633.1">
    <property type="nucleotide sequence ID" value="NZ_CP023154.1"/>
</dbReference>
<dbReference type="STRING" id="186497.PF1486"/>
<dbReference type="PaxDb" id="186497-PF1486"/>
<dbReference type="KEGG" id="pfu:PF1486"/>
<dbReference type="PATRIC" id="fig|186497.12.peg.1549"/>
<dbReference type="eggNOG" id="arCOG02119">
    <property type="taxonomic scope" value="Archaea"/>
</dbReference>
<dbReference type="HOGENOM" id="CLU_138334_0_0_2"/>
<dbReference type="OrthoDB" id="63517at2157"/>
<dbReference type="PhylomeDB" id="Q8U0U6"/>
<dbReference type="Proteomes" id="UP000001013">
    <property type="component" value="Chromosome"/>
</dbReference>
<dbReference type="HAMAP" id="MF_01223">
    <property type="entry name" value="UPF0212"/>
    <property type="match status" value="1"/>
</dbReference>
<dbReference type="InterPro" id="IPR007564">
    <property type="entry name" value="UPF0212"/>
</dbReference>
<dbReference type="NCBIfam" id="NF003035">
    <property type="entry name" value="PRK03922.1"/>
    <property type="match status" value="1"/>
</dbReference>
<dbReference type="PANTHER" id="PTHR42199">
    <property type="entry name" value="UPF0212 PROTEIN MJ0068"/>
    <property type="match status" value="1"/>
</dbReference>
<dbReference type="PANTHER" id="PTHR42199:SF1">
    <property type="entry name" value="UPF0212 PROTEIN TK1194"/>
    <property type="match status" value="1"/>
</dbReference>
<dbReference type="Pfam" id="PF04475">
    <property type="entry name" value="DUF555"/>
    <property type="match status" value="1"/>
</dbReference>
<dbReference type="PIRSF" id="PIRSF016934">
    <property type="entry name" value="UCP016934"/>
    <property type="match status" value="1"/>
</dbReference>
<accession>Q8U0U6</accession>
<comment type="similarity">
    <text evidence="1">Belongs to the UPF0212 family.</text>
</comment>
<reference key="1">
    <citation type="journal article" date="1999" name="Genetics">
        <title>Divergence of the hyperthermophilic archaea Pyrococcus furiosus and P. horikoshii inferred from complete genomic sequences.</title>
        <authorList>
            <person name="Maeder D.L."/>
            <person name="Weiss R.B."/>
            <person name="Dunn D.M."/>
            <person name="Cherry J.L."/>
            <person name="Gonzalez J.M."/>
            <person name="DiRuggiero J."/>
            <person name="Robb F.T."/>
        </authorList>
    </citation>
    <scope>NUCLEOTIDE SEQUENCE [LARGE SCALE GENOMIC DNA]</scope>
    <source>
        <strain>ATCC 43587 / DSM 3638 / JCM 8422 / Vc1</strain>
    </source>
</reference>
<keyword id="KW-1185">Reference proteome</keyword>
<evidence type="ECO:0000255" key="1">
    <source>
        <dbReference type="HAMAP-Rule" id="MF_01223"/>
    </source>
</evidence>